<accession>A9KZ17</accession>
<name>RL25_SHEB9</name>
<dbReference type="EMBL" id="CP000891">
    <property type="protein sequence ID" value="ABX49105.1"/>
    <property type="molecule type" value="Genomic_DNA"/>
</dbReference>
<dbReference type="RefSeq" id="WP_006081398.1">
    <property type="nucleotide sequence ID" value="NC_009997.1"/>
</dbReference>
<dbReference type="SMR" id="A9KZ17"/>
<dbReference type="GeneID" id="11772134"/>
<dbReference type="KEGG" id="sbn:Sbal195_1934"/>
<dbReference type="HOGENOM" id="CLU_137946_0_0_6"/>
<dbReference type="Proteomes" id="UP000000770">
    <property type="component" value="Chromosome"/>
</dbReference>
<dbReference type="GO" id="GO:0022625">
    <property type="term" value="C:cytosolic large ribosomal subunit"/>
    <property type="evidence" value="ECO:0007669"/>
    <property type="project" value="TreeGrafter"/>
</dbReference>
<dbReference type="GO" id="GO:0008097">
    <property type="term" value="F:5S rRNA binding"/>
    <property type="evidence" value="ECO:0007669"/>
    <property type="project" value="InterPro"/>
</dbReference>
<dbReference type="GO" id="GO:0003735">
    <property type="term" value="F:structural constituent of ribosome"/>
    <property type="evidence" value="ECO:0007669"/>
    <property type="project" value="InterPro"/>
</dbReference>
<dbReference type="GO" id="GO:0006412">
    <property type="term" value="P:translation"/>
    <property type="evidence" value="ECO:0007669"/>
    <property type="project" value="UniProtKB-UniRule"/>
</dbReference>
<dbReference type="CDD" id="cd00495">
    <property type="entry name" value="Ribosomal_L25_TL5_CTC"/>
    <property type="match status" value="1"/>
</dbReference>
<dbReference type="FunFam" id="2.40.240.10:FF:000002">
    <property type="entry name" value="50S ribosomal protein L25"/>
    <property type="match status" value="1"/>
</dbReference>
<dbReference type="Gene3D" id="2.40.240.10">
    <property type="entry name" value="Ribosomal Protein L25, Chain P"/>
    <property type="match status" value="1"/>
</dbReference>
<dbReference type="HAMAP" id="MF_01336">
    <property type="entry name" value="Ribosomal_bL25"/>
    <property type="match status" value="1"/>
</dbReference>
<dbReference type="InterPro" id="IPR020056">
    <property type="entry name" value="Rbsml_bL25/Gln-tRNA_synth_N"/>
</dbReference>
<dbReference type="InterPro" id="IPR011035">
    <property type="entry name" value="Ribosomal_bL25/Gln-tRNA_synth"/>
</dbReference>
<dbReference type="InterPro" id="IPR001021">
    <property type="entry name" value="Ribosomal_bL25_long"/>
</dbReference>
<dbReference type="InterPro" id="IPR020055">
    <property type="entry name" value="Ribosomal_bL25_short"/>
</dbReference>
<dbReference type="InterPro" id="IPR029751">
    <property type="entry name" value="Ribosomal_L25_dom"/>
</dbReference>
<dbReference type="InterPro" id="IPR020930">
    <property type="entry name" value="Ribosomal_uL5_bac-type"/>
</dbReference>
<dbReference type="NCBIfam" id="TIGR00731">
    <property type="entry name" value="bL25_bact_ctc"/>
    <property type="match status" value="1"/>
</dbReference>
<dbReference type="NCBIfam" id="NF004612">
    <property type="entry name" value="PRK05943.1"/>
    <property type="match status" value="1"/>
</dbReference>
<dbReference type="PANTHER" id="PTHR33284">
    <property type="entry name" value="RIBOSOMAL PROTEIN L25/GLN-TRNA SYNTHETASE, ANTI-CODON-BINDING DOMAIN-CONTAINING PROTEIN"/>
    <property type="match status" value="1"/>
</dbReference>
<dbReference type="PANTHER" id="PTHR33284:SF1">
    <property type="entry name" value="RIBOSOMAL PROTEIN L25_GLN-TRNA SYNTHETASE, ANTI-CODON-BINDING DOMAIN-CONTAINING PROTEIN"/>
    <property type="match status" value="1"/>
</dbReference>
<dbReference type="Pfam" id="PF01386">
    <property type="entry name" value="Ribosomal_L25p"/>
    <property type="match status" value="1"/>
</dbReference>
<dbReference type="SUPFAM" id="SSF50715">
    <property type="entry name" value="Ribosomal protein L25-like"/>
    <property type="match status" value="1"/>
</dbReference>
<feature type="chain" id="PRO_1000086643" description="Large ribosomal subunit protein bL25">
    <location>
        <begin position="1"/>
        <end position="95"/>
    </location>
</feature>
<gene>
    <name evidence="1" type="primary">rplY</name>
    <name type="ordered locus">Sbal195_1934</name>
</gene>
<evidence type="ECO:0000255" key="1">
    <source>
        <dbReference type="HAMAP-Rule" id="MF_01336"/>
    </source>
</evidence>
<evidence type="ECO:0000305" key="2"/>
<proteinExistence type="inferred from homology"/>
<organism>
    <name type="scientific">Shewanella baltica (strain OS195)</name>
    <dbReference type="NCBI Taxonomy" id="399599"/>
    <lineage>
        <taxon>Bacteria</taxon>
        <taxon>Pseudomonadati</taxon>
        <taxon>Pseudomonadota</taxon>
        <taxon>Gammaproteobacteria</taxon>
        <taxon>Alteromonadales</taxon>
        <taxon>Shewanellaceae</taxon>
        <taxon>Shewanella</taxon>
    </lineage>
</organism>
<protein>
    <recommendedName>
        <fullName evidence="1">Large ribosomal subunit protein bL25</fullName>
    </recommendedName>
    <alternativeName>
        <fullName evidence="2">50S ribosomal protein L25</fullName>
    </alternativeName>
</protein>
<comment type="function">
    <text evidence="1">This is one of the proteins that binds to the 5S RNA in the ribosome where it forms part of the central protuberance.</text>
</comment>
<comment type="subunit">
    <text evidence="1">Part of the 50S ribosomal subunit; part of the 5S rRNA/L5/L18/L25 subcomplex. Contacts the 5S rRNA. Binds to the 5S rRNA independently of L5 and L18.</text>
</comment>
<comment type="similarity">
    <text evidence="1">Belongs to the bacterial ribosomal protein bL25 family.</text>
</comment>
<keyword id="KW-0687">Ribonucleoprotein</keyword>
<keyword id="KW-0689">Ribosomal protein</keyword>
<keyword id="KW-0694">RNA-binding</keyword>
<keyword id="KW-0699">rRNA-binding</keyword>
<sequence length="95" mass="10615">MSYTIQAQTRTEIGKGSSRRLRHAGKVPAVIYGQGKEPVSIVFDHKDIINIQANADFYTSTLTIVVDGKEVGVRAQAMQRHVFKPLIEHVDFVYA</sequence>
<reference key="1">
    <citation type="submission" date="2007-11" db="EMBL/GenBank/DDBJ databases">
        <title>Complete sequence of chromosome of Shewanella baltica OS195.</title>
        <authorList>
            <consortium name="US DOE Joint Genome Institute"/>
            <person name="Copeland A."/>
            <person name="Lucas S."/>
            <person name="Lapidus A."/>
            <person name="Barry K."/>
            <person name="Glavina del Rio T."/>
            <person name="Dalin E."/>
            <person name="Tice H."/>
            <person name="Pitluck S."/>
            <person name="Chain P."/>
            <person name="Malfatti S."/>
            <person name="Shin M."/>
            <person name="Vergez L."/>
            <person name="Schmutz J."/>
            <person name="Larimer F."/>
            <person name="Land M."/>
            <person name="Hauser L."/>
            <person name="Kyrpides N."/>
            <person name="Kim E."/>
            <person name="Brettar I."/>
            <person name="Rodrigues J."/>
            <person name="Konstantinidis K."/>
            <person name="Klappenbach J."/>
            <person name="Hofle M."/>
            <person name="Tiedje J."/>
            <person name="Richardson P."/>
        </authorList>
    </citation>
    <scope>NUCLEOTIDE SEQUENCE [LARGE SCALE GENOMIC DNA]</scope>
    <source>
        <strain>OS195</strain>
    </source>
</reference>